<dbReference type="EMBL" id="CP000259">
    <property type="protein sequence ID" value="ABF32998.1"/>
    <property type="molecule type" value="Genomic_DNA"/>
</dbReference>
<dbReference type="RefSeq" id="WP_002991356.1">
    <property type="nucleotide sequence ID" value="NC_008021.1"/>
</dbReference>
<dbReference type="SMR" id="Q1JJH5"/>
<dbReference type="KEGG" id="spk:MGAS9429_Spy1811"/>
<dbReference type="HOGENOM" id="CLU_030805_9_3_9"/>
<dbReference type="Proteomes" id="UP000002433">
    <property type="component" value="Chromosome"/>
</dbReference>
<dbReference type="CDD" id="cd00885">
    <property type="entry name" value="cinA"/>
    <property type="match status" value="1"/>
</dbReference>
<dbReference type="Gene3D" id="3.30.70.2860">
    <property type="match status" value="1"/>
</dbReference>
<dbReference type="Gene3D" id="3.90.950.20">
    <property type="entry name" value="CinA-like"/>
    <property type="match status" value="1"/>
</dbReference>
<dbReference type="Gene3D" id="3.40.980.10">
    <property type="entry name" value="MoaB/Mog-like domain"/>
    <property type="match status" value="1"/>
</dbReference>
<dbReference type="HAMAP" id="MF_00226_B">
    <property type="entry name" value="CinA_B"/>
    <property type="match status" value="1"/>
</dbReference>
<dbReference type="InterPro" id="IPR050101">
    <property type="entry name" value="CinA"/>
</dbReference>
<dbReference type="InterPro" id="IPR036653">
    <property type="entry name" value="CinA-like_C"/>
</dbReference>
<dbReference type="InterPro" id="IPR008136">
    <property type="entry name" value="CinA_C"/>
</dbReference>
<dbReference type="InterPro" id="IPR041424">
    <property type="entry name" value="CinA_KH"/>
</dbReference>
<dbReference type="InterPro" id="IPR008135">
    <property type="entry name" value="Competence-induced_CinA"/>
</dbReference>
<dbReference type="InterPro" id="IPR036425">
    <property type="entry name" value="MoaB/Mog-like_dom_sf"/>
</dbReference>
<dbReference type="InterPro" id="IPR001453">
    <property type="entry name" value="MoaB/Mog_dom"/>
</dbReference>
<dbReference type="NCBIfam" id="TIGR00200">
    <property type="entry name" value="cinA_nterm"/>
    <property type="match status" value="1"/>
</dbReference>
<dbReference type="NCBIfam" id="TIGR00177">
    <property type="entry name" value="molyb_syn"/>
    <property type="match status" value="1"/>
</dbReference>
<dbReference type="NCBIfam" id="TIGR00199">
    <property type="entry name" value="PncC_domain"/>
    <property type="match status" value="1"/>
</dbReference>
<dbReference type="NCBIfam" id="NF001813">
    <property type="entry name" value="PRK00549.1"/>
    <property type="match status" value="1"/>
</dbReference>
<dbReference type="PANTHER" id="PTHR13939">
    <property type="entry name" value="NICOTINAMIDE-NUCLEOTIDE AMIDOHYDROLASE PNCC"/>
    <property type="match status" value="1"/>
</dbReference>
<dbReference type="PANTHER" id="PTHR13939:SF0">
    <property type="entry name" value="NMN AMIDOHYDROLASE-LIKE PROTEIN YFAY"/>
    <property type="match status" value="1"/>
</dbReference>
<dbReference type="Pfam" id="PF02464">
    <property type="entry name" value="CinA"/>
    <property type="match status" value="1"/>
</dbReference>
<dbReference type="Pfam" id="PF18146">
    <property type="entry name" value="CinA_KH"/>
    <property type="match status" value="1"/>
</dbReference>
<dbReference type="Pfam" id="PF00994">
    <property type="entry name" value="MoCF_biosynth"/>
    <property type="match status" value="1"/>
</dbReference>
<dbReference type="PIRSF" id="PIRSF006728">
    <property type="entry name" value="CinA"/>
    <property type="match status" value="1"/>
</dbReference>
<dbReference type="SMART" id="SM00852">
    <property type="entry name" value="MoCF_biosynth"/>
    <property type="match status" value="1"/>
</dbReference>
<dbReference type="SUPFAM" id="SSF142433">
    <property type="entry name" value="CinA-like"/>
    <property type="match status" value="1"/>
</dbReference>
<dbReference type="SUPFAM" id="SSF53218">
    <property type="entry name" value="Molybdenum cofactor biosynthesis proteins"/>
    <property type="match status" value="1"/>
</dbReference>
<comment type="similarity">
    <text evidence="1">Belongs to the CinA family.</text>
</comment>
<proteinExistence type="inferred from homology"/>
<reference key="1">
    <citation type="journal article" date="2006" name="Proc. Natl. Acad. Sci. U.S.A.">
        <title>Molecular genetic anatomy of inter- and intraserotype variation in the human bacterial pathogen group A Streptococcus.</title>
        <authorList>
            <person name="Beres S.B."/>
            <person name="Richter E.W."/>
            <person name="Nagiec M.J."/>
            <person name="Sumby P."/>
            <person name="Porcella S.F."/>
            <person name="DeLeo F.R."/>
            <person name="Musser J.M."/>
        </authorList>
    </citation>
    <scope>NUCLEOTIDE SEQUENCE [LARGE SCALE GENOMIC DNA]</scope>
    <source>
        <strain>MGAS9429</strain>
    </source>
</reference>
<evidence type="ECO:0000255" key="1">
    <source>
        <dbReference type="HAMAP-Rule" id="MF_00226"/>
    </source>
</evidence>
<organism>
    <name type="scientific">Streptococcus pyogenes serotype M12 (strain MGAS9429)</name>
    <dbReference type="NCBI Taxonomy" id="370551"/>
    <lineage>
        <taxon>Bacteria</taxon>
        <taxon>Bacillati</taxon>
        <taxon>Bacillota</taxon>
        <taxon>Bacilli</taxon>
        <taxon>Lactobacillales</taxon>
        <taxon>Streptococcaceae</taxon>
        <taxon>Streptococcus</taxon>
    </lineage>
</organism>
<sequence>MKAELIAVGTEILTGQIVNTNAQFLSEKMAELGIDVYFQTAVGDNEERLLSVITTASQRSDLVILCGGLGPTKDDLTKQTLAKYLRKDLVYDEQACQKLDDFFAKRKPSSRTPNNERQAQVIEGSIPLPNKTGLAVGGFITVDGISYVVLPGPPSELKSMVNEELVPLLSKQYSTLYSKVLRFFGVGESQLVTVLSDFIENQTDPTIAPYAKTGEVTLRLSTKTENQALADKKLGQLEAQLLSRKTLEGQPLADVFYGYGEDNSLARETFELLVKYDKTITAAESLTAGLFQSTLASFPGASQVFNGGFVAYSMEEKAKMLGLPLEELKSHGVVSAYTAEGMAEQARLLTGADIGVSLTGVAGPDMLEEQPAGTVFIGLATQNKVESIKVLISGRSRLDVRYIATLHAFNMVRKTLLKLENLL</sequence>
<gene>
    <name evidence="1" type="primary">cinA</name>
    <name type="ordered locus">MGAS9429_Spy1811</name>
</gene>
<feature type="chain" id="PRO_1000058732" description="Putative competence-damage inducible protein">
    <location>
        <begin position="1"/>
        <end position="423"/>
    </location>
</feature>
<accession>Q1JJH5</accession>
<protein>
    <recommendedName>
        <fullName evidence="1">Putative competence-damage inducible protein</fullName>
    </recommendedName>
</protein>
<name>CINA_STRPC</name>